<reference key="1">
    <citation type="submission" date="2006-10" db="EMBL/GenBank/DDBJ databases">
        <authorList>
            <person name="Fleischmann R.D."/>
            <person name="Dodson R.J."/>
            <person name="Haft D.H."/>
            <person name="Merkel J.S."/>
            <person name="Nelson W.C."/>
            <person name="Fraser C.M."/>
        </authorList>
    </citation>
    <scope>NUCLEOTIDE SEQUENCE [LARGE SCALE GENOMIC DNA]</scope>
    <source>
        <strain>ATCC 700084 / mc(2)155</strain>
    </source>
</reference>
<reference key="2">
    <citation type="journal article" date="2007" name="Genome Biol.">
        <title>Interrupted coding sequences in Mycobacterium smegmatis: authentic mutations or sequencing errors?</title>
        <authorList>
            <person name="Deshayes C."/>
            <person name="Perrodou E."/>
            <person name="Gallien S."/>
            <person name="Euphrasie D."/>
            <person name="Schaeffer C."/>
            <person name="Van-Dorsselaer A."/>
            <person name="Poch O."/>
            <person name="Lecompte O."/>
            <person name="Reyrat J.-M."/>
        </authorList>
    </citation>
    <scope>NUCLEOTIDE SEQUENCE [LARGE SCALE GENOMIC DNA]</scope>
    <source>
        <strain>ATCC 700084 / mc(2)155</strain>
    </source>
</reference>
<reference key="3">
    <citation type="journal article" date="2009" name="Genome Res.">
        <title>Ortho-proteogenomics: multiple proteomes investigation through orthology and a new MS-based protocol.</title>
        <authorList>
            <person name="Gallien S."/>
            <person name="Perrodou E."/>
            <person name="Carapito C."/>
            <person name="Deshayes C."/>
            <person name="Reyrat J.-M."/>
            <person name="Van Dorsselaer A."/>
            <person name="Poch O."/>
            <person name="Schaeffer C."/>
            <person name="Lecompte O."/>
        </authorList>
    </citation>
    <scope>NUCLEOTIDE SEQUENCE [LARGE SCALE GENOMIC DNA]</scope>
    <source>
        <strain>ATCC 700084 / mc(2)155</strain>
    </source>
</reference>
<reference key="4">
    <citation type="journal article" date="2010" name="Nat. Chem. Biol.">
        <title>Self-poisoning of Mycobacterium tuberculosis by targeting GlgE in an alpha-glucan pathway.</title>
        <authorList>
            <person name="Kalscheuer R."/>
            <person name="Syson K."/>
            <person name="Veeraraghavan U."/>
            <person name="Weinrick B."/>
            <person name="Biermann K.E."/>
            <person name="Liu Z."/>
            <person name="Sacchettini J.C."/>
            <person name="Besra G."/>
            <person name="Bornemann S."/>
            <person name="Jacobs W.R. Jr."/>
        </authorList>
    </citation>
    <scope>FUNCTION</scope>
    <scope>DISRUPTION PHENOTYPE</scope>
    <source>
        <strain>ATCC 700084 / mc(2)155</strain>
    </source>
</reference>
<comment type="function">
    <text evidence="2 3">Catalyzes the ATP-dependent phosphorylation of maltose to maltose 1-phosphate (Probable). Is involved in a branched alpha-glucan biosynthetic pathway from trehalose, together with TreS, GlgE and GlgB.</text>
</comment>
<comment type="catalytic activity">
    <reaction>
        <text>D-maltose + ATP = alpha-maltose 1-phosphate + ADP + H(+)</text>
        <dbReference type="Rhea" id="RHEA:31915"/>
        <dbReference type="ChEBI" id="CHEBI:15378"/>
        <dbReference type="ChEBI" id="CHEBI:17306"/>
        <dbReference type="ChEBI" id="CHEBI:30616"/>
        <dbReference type="ChEBI" id="CHEBI:63576"/>
        <dbReference type="ChEBI" id="CHEBI:456216"/>
        <dbReference type="EC" id="2.7.1.175"/>
    </reaction>
</comment>
<comment type="pathway">
    <text>Glycan biosynthesis; glycogen biosynthesis.</text>
</comment>
<comment type="subunit">
    <text evidence="1">Monomer.</text>
</comment>
<comment type="disruption phenotype">
    <text evidence="2">Cells lacking this gene display maltose accumulation.</text>
</comment>
<comment type="similarity">
    <text evidence="3">Belongs to the aminoglycoside phosphotransferase family.</text>
</comment>
<accession>A0R6D9</accession>
<accession>I7FV18</accession>
<protein>
    <recommendedName>
        <fullName>Maltokinase</fullName>
        <shortName>MaK</shortName>
        <ecNumber>2.7.1.175</ecNumber>
    </recommendedName>
    <alternativeName>
        <fullName>Maltose-1-phosphate synthase</fullName>
    </alternativeName>
</protein>
<proteinExistence type="evidence at protein level"/>
<name>MAK_MYCS2</name>
<organism>
    <name type="scientific">Mycolicibacterium smegmatis (strain ATCC 700084 / mc(2)155)</name>
    <name type="common">Mycobacterium smegmatis</name>
    <dbReference type="NCBI Taxonomy" id="246196"/>
    <lineage>
        <taxon>Bacteria</taxon>
        <taxon>Bacillati</taxon>
        <taxon>Actinomycetota</taxon>
        <taxon>Actinomycetes</taxon>
        <taxon>Mycobacteriales</taxon>
        <taxon>Mycobacteriaceae</taxon>
        <taxon>Mycolicibacterium</taxon>
    </lineage>
</organism>
<feature type="chain" id="PRO_0000412889" description="Maltokinase">
    <location>
        <begin position="1"/>
        <end position="441"/>
    </location>
</feature>
<sequence>MSVEFEDWLTQQRWYAGRNRELVSATTAMAVRLRDGLELVLLQANYADGPDERYQVIVATGSGPIDEYSVVATIGIADGQTAYDALYDPDATRYLLSLIDESATVQNVRFVREPDVELPLDAPPRVFGAEQSNTSVVFGEDAIFKLFRRITPGVHPDIELNRVLARAGNPHVARLLGSFETEWEGEPYALGMVTEFAANSAEGWDMATTSTRDLFAEGDLYAEEVGGDFAGEAYRLGEAVASVHACLAHELGTEEVPFPADVMAQRLAAAVDAVPELREHVPQIEERYHKLADTTMTVQRVHGDLHLGQVLRTPKGWLLIDFEGEPGQPLDERRRPDTPVRDVAGILRSFEYAAHQRLVDQAGDDDDRARQLAARAREWVTRNCASFCDGYAAEAGTDPRDSADLLAAYELDKAVYEAAYEARHRPSWLPIPLGSIARLLE</sequence>
<evidence type="ECO:0000250" key="1"/>
<evidence type="ECO:0000269" key="2">
    <source>
    </source>
</evidence>
<evidence type="ECO:0000305" key="3"/>
<keyword id="KW-0002">3D-structure</keyword>
<keyword id="KW-0067">ATP-binding</keyword>
<keyword id="KW-0119">Carbohydrate metabolism</keyword>
<keyword id="KW-0320">Glycogen biosynthesis</keyword>
<keyword id="KW-0321">Glycogen metabolism</keyword>
<keyword id="KW-0418">Kinase</keyword>
<keyword id="KW-0547">Nucleotide-binding</keyword>
<keyword id="KW-1185">Reference proteome</keyword>
<keyword id="KW-0808">Transferase</keyword>
<gene>
    <name type="primary">mak</name>
    <name type="synonym">pep2</name>
    <name type="ordered locus">MSMEG_6514</name>
    <name type="ordered locus">MSMEI_6342</name>
</gene>
<dbReference type="EC" id="2.7.1.175"/>
<dbReference type="EMBL" id="CP000480">
    <property type="protein sequence ID" value="ABK72477.1"/>
    <property type="molecule type" value="Genomic_DNA"/>
</dbReference>
<dbReference type="EMBL" id="CP001663">
    <property type="protein sequence ID" value="AFP42768.1"/>
    <property type="molecule type" value="Genomic_DNA"/>
</dbReference>
<dbReference type="RefSeq" id="WP_011731333.1">
    <property type="nucleotide sequence ID" value="NZ_SIJM01000033.1"/>
</dbReference>
<dbReference type="RefSeq" id="YP_890727.1">
    <property type="nucleotide sequence ID" value="NC_008596.1"/>
</dbReference>
<dbReference type="PDB" id="5JY7">
    <property type="method" value="X-ray"/>
    <property type="resolution" value="3.60 A"/>
    <property type="chains" value="I/J/K/L/M/N/O/P=1-441"/>
</dbReference>
<dbReference type="PDBsum" id="5JY7"/>
<dbReference type="SMR" id="A0R6D9"/>
<dbReference type="STRING" id="246196.MSMEG_6514"/>
<dbReference type="PaxDb" id="246196-MSMEI_6342"/>
<dbReference type="KEGG" id="msb:LJ00_32200"/>
<dbReference type="KEGG" id="msg:MSMEI_6342"/>
<dbReference type="KEGG" id="msm:MSMEG_6514"/>
<dbReference type="PATRIC" id="fig|246196.19.peg.6338"/>
<dbReference type="eggNOG" id="COG3281">
    <property type="taxonomic scope" value="Bacteria"/>
</dbReference>
<dbReference type="OrthoDB" id="3787729at2"/>
<dbReference type="BRENDA" id="2.7.1.175">
    <property type="organism ID" value="3512"/>
</dbReference>
<dbReference type="UniPathway" id="UPA00164"/>
<dbReference type="Proteomes" id="UP000000757">
    <property type="component" value="Chromosome"/>
</dbReference>
<dbReference type="Proteomes" id="UP000006158">
    <property type="component" value="Chromosome"/>
</dbReference>
<dbReference type="GO" id="GO:0005524">
    <property type="term" value="F:ATP binding"/>
    <property type="evidence" value="ECO:0007669"/>
    <property type="project" value="UniProtKB-KW"/>
</dbReference>
<dbReference type="GO" id="GO:0016301">
    <property type="term" value="F:kinase activity"/>
    <property type="evidence" value="ECO:0007669"/>
    <property type="project" value="UniProtKB-KW"/>
</dbReference>
<dbReference type="GO" id="GO:0046835">
    <property type="term" value="P:carbohydrate phosphorylation"/>
    <property type="evidence" value="ECO:0000250"/>
    <property type="project" value="UniProtKB"/>
</dbReference>
<dbReference type="GO" id="GO:0005978">
    <property type="term" value="P:glycogen biosynthetic process"/>
    <property type="evidence" value="ECO:0007669"/>
    <property type="project" value="UniProtKB-UniPathway"/>
</dbReference>
<dbReference type="GO" id="GO:0005992">
    <property type="term" value="P:trehalose biosynthetic process"/>
    <property type="evidence" value="ECO:0000250"/>
    <property type="project" value="UniProtKB"/>
</dbReference>
<dbReference type="FunFam" id="3.90.1200.10:FF:000010">
    <property type="entry name" value="Maltokinase"/>
    <property type="match status" value="1"/>
</dbReference>
<dbReference type="Gene3D" id="3.90.1200.10">
    <property type="match status" value="1"/>
</dbReference>
<dbReference type="InterPro" id="IPR011009">
    <property type="entry name" value="Kinase-like_dom_sf"/>
</dbReference>
<dbReference type="InterPro" id="IPR040999">
    <property type="entry name" value="Mak_N_cap"/>
</dbReference>
<dbReference type="Pfam" id="PF18085">
    <property type="entry name" value="Mak_N_cap"/>
    <property type="match status" value="1"/>
</dbReference>
<dbReference type="SUPFAM" id="SSF56112">
    <property type="entry name" value="Protein kinase-like (PK-like)"/>
    <property type="match status" value="1"/>
</dbReference>